<comment type="function">
    <text evidence="1">Catalyzes a salvage reaction resulting in the formation of AMP, that is energically less costly than de novo synthesis.</text>
</comment>
<comment type="catalytic activity">
    <reaction evidence="1">
        <text>AMP + diphosphate = 5-phospho-alpha-D-ribose 1-diphosphate + adenine</text>
        <dbReference type="Rhea" id="RHEA:16609"/>
        <dbReference type="ChEBI" id="CHEBI:16708"/>
        <dbReference type="ChEBI" id="CHEBI:33019"/>
        <dbReference type="ChEBI" id="CHEBI:58017"/>
        <dbReference type="ChEBI" id="CHEBI:456215"/>
        <dbReference type="EC" id="2.4.2.7"/>
    </reaction>
</comment>
<comment type="pathway">
    <text evidence="1">Purine metabolism; AMP biosynthesis via salvage pathway; AMP from adenine: step 1/1.</text>
</comment>
<comment type="subunit">
    <text evidence="1">Homodimer.</text>
</comment>
<comment type="subcellular location">
    <subcellularLocation>
        <location evidence="1">Cytoplasm</location>
    </subcellularLocation>
</comment>
<comment type="similarity">
    <text evidence="1">Belongs to the purine/pyrimidine phosphoribosyltransferase family.</text>
</comment>
<gene>
    <name evidence="1" type="primary">apt</name>
    <name type="ordered locus">Mrad2831_3506</name>
</gene>
<evidence type="ECO:0000255" key="1">
    <source>
        <dbReference type="HAMAP-Rule" id="MF_00004"/>
    </source>
</evidence>
<reference key="1">
    <citation type="submission" date="2008-03" db="EMBL/GenBank/DDBJ databases">
        <title>Complete sequence of chromosome of Methylobacterium radiotolerans JCM 2831.</title>
        <authorList>
            <consortium name="US DOE Joint Genome Institute"/>
            <person name="Copeland A."/>
            <person name="Lucas S."/>
            <person name="Lapidus A."/>
            <person name="Glavina del Rio T."/>
            <person name="Dalin E."/>
            <person name="Tice H."/>
            <person name="Bruce D."/>
            <person name="Goodwin L."/>
            <person name="Pitluck S."/>
            <person name="Kiss H."/>
            <person name="Brettin T."/>
            <person name="Detter J.C."/>
            <person name="Han C."/>
            <person name="Kuske C.R."/>
            <person name="Schmutz J."/>
            <person name="Larimer F."/>
            <person name="Land M."/>
            <person name="Hauser L."/>
            <person name="Kyrpides N."/>
            <person name="Mikhailova N."/>
            <person name="Marx C.J."/>
            <person name="Richardson P."/>
        </authorList>
    </citation>
    <scope>NUCLEOTIDE SEQUENCE [LARGE SCALE GENOMIC DNA]</scope>
    <source>
        <strain>ATCC 27329 / DSM 1819 / JCM 2831 / NBRC 15690 / NCIMB 10815 / 0-1</strain>
    </source>
</reference>
<name>APT_METRJ</name>
<protein>
    <recommendedName>
        <fullName evidence="1">Adenine phosphoribosyltransferase</fullName>
        <shortName evidence="1">APRT</shortName>
        <ecNumber evidence="1">2.4.2.7</ecNumber>
    </recommendedName>
</protein>
<dbReference type="EC" id="2.4.2.7" evidence="1"/>
<dbReference type="EMBL" id="CP001001">
    <property type="protein sequence ID" value="ACB25483.1"/>
    <property type="molecule type" value="Genomic_DNA"/>
</dbReference>
<dbReference type="RefSeq" id="WP_012320444.1">
    <property type="nucleotide sequence ID" value="NC_010505.1"/>
</dbReference>
<dbReference type="SMR" id="B1LUP7"/>
<dbReference type="STRING" id="426355.Mrad2831_3506"/>
<dbReference type="GeneID" id="6139559"/>
<dbReference type="KEGG" id="mrd:Mrad2831_3506"/>
<dbReference type="eggNOG" id="COG0503">
    <property type="taxonomic scope" value="Bacteria"/>
</dbReference>
<dbReference type="HOGENOM" id="CLU_063339_3_0_5"/>
<dbReference type="OrthoDB" id="9803963at2"/>
<dbReference type="UniPathway" id="UPA00588">
    <property type="reaction ID" value="UER00646"/>
</dbReference>
<dbReference type="Proteomes" id="UP000006589">
    <property type="component" value="Chromosome"/>
</dbReference>
<dbReference type="GO" id="GO:0005737">
    <property type="term" value="C:cytoplasm"/>
    <property type="evidence" value="ECO:0007669"/>
    <property type="project" value="UniProtKB-SubCell"/>
</dbReference>
<dbReference type="GO" id="GO:0002055">
    <property type="term" value="F:adenine binding"/>
    <property type="evidence" value="ECO:0007669"/>
    <property type="project" value="TreeGrafter"/>
</dbReference>
<dbReference type="GO" id="GO:0003999">
    <property type="term" value="F:adenine phosphoribosyltransferase activity"/>
    <property type="evidence" value="ECO:0007669"/>
    <property type="project" value="UniProtKB-UniRule"/>
</dbReference>
<dbReference type="GO" id="GO:0016208">
    <property type="term" value="F:AMP binding"/>
    <property type="evidence" value="ECO:0007669"/>
    <property type="project" value="TreeGrafter"/>
</dbReference>
<dbReference type="GO" id="GO:0006168">
    <property type="term" value="P:adenine salvage"/>
    <property type="evidence" value="ECO:0007669"/>
    <property type="project" value="InterPro"/>
</dbReference>
<dbReference type="GO" id="GO:0044209">
    <property type="term" value="P:AMP salvage"/>
    <property type="evidence" value="ECO:0007669"/>
    <property type="project" value="UniProtKB-UniRule"/>
</dbReference>
<dbReference type="GO" id="GO:0006166">
    <property type="term" value="P:purine ribonucleoside salvage"/>
    <property type="evidence" value="ECO:0007669"/>
    <property type="project" value="UniProtKB-KW"/>
</dbReference>
<dbReference type="CDD" id="cd06223">
    <property type="entry name" value="PRTases_typeI"/>
    <property type="match status" value="1"/>
</dbReference>
<dbReference type="FunFam" id="3.40.50.2020:FF:000021">
    <property type="entry name" value="Adenine phosphoribosyltransferase"/>
    <property type="match status" value="1"/>
</dbReference>
<dbReference type="Gene3D" id="3.40.50.2020">
    <property type="match status" value="1"/>
</dbReference>
<dbReference type="HAMAP" id="MF_00004">
    <property type="entry name" value="Aden_phosphoribosyltr"/>
    <property type="match status" value="1"/>
</dbReference>
<dbReference type="InterPro" id="IPR005764">
    <property type="entry name" value="Ade_phspho_trans"/>
</dbReference>
<dbReference type="InterPro" id="IPR000836">
    <property type="entry name" value="PRibTrfase_dom"/>
</dbReference>
<dbReference type="InterPro" id="IPR029057">
    <property type="entry name" value="PRTase-like"/>
</dbReference>
<dbReference type="InterPro" id="IPR050054">
    <property type="entry name" value="UPRTase/APRTase"/>
</dbReference>
<dbReference type="NCBIfam" id="TIGR01090">
    <property type="entry name" value="apt"/>
    <property type="match status" value="1"/>
</dbReference>
<dbReference type="NCBIfam" id="NF002634">
    <property type="entry name" value="PRK02304.1-3"/>
    <property type="match status" value="1"/>
</dbReference>
<dbReference type="NCBIfam" id="NF002636">
    <property type="entry name" value="PRK02304.1-5"/>
    <property type="match status" value="1"/>
</dbReference>
<dbReference type="PANTHER" id="PTHR32315">
    <property type="entry name" value="ADENINE PHOSPHORIBOSYLTRANSFERASE"/>
    <property type="match status" value="1"/>
</dbReference>
<dbReference type="PANTHER" id="PTHR32315:SF3">
    <property type="entry name" value="ADENINE PHOSPHORIBOSYLTRANSFERASE"/>
    <property type="match status" value="1"/>
</dbReference>
<dbReference type="Pfam" id="PF00156">
    <property type="entry name" value="Pribosyltran"/>
    <property type="match status" value="1"/>
</dbReference>
<dbReference type="SUPFAM" id="SSF53271">
    <property type="entry name" value="PRTase-like"/>
    <property type="match status" value="1"/>
</dbReference>
<dbReference type="PROSITE" id="PS00103">
    <property type="entry name" value="PUR_PYR_PR_TRANSFER"/>
    <property type="match status" value="1"/>
</dbReference>
<feature type="chain" id="PRO_1000116179" description="Adenine phosphoribosyltransferase">
    <location>
        <begin position="1"/>
        <end position="181"/>
    </location>
</feature>
<accession>B1LUP7</accession>
<organism>
    <name type="scientific">Methylobacterium radiotolerans (strain ATCC 27329 / DSM 1819 / JCM 2831 / NBRC 15690 / NCIMB 10815 / 0-1)</name>
    <dbReference type="NCBI Taxonomy" id="426355"/>
    <lineage>
        <taxon>Bacteria</taxon>
        <taxon>Pseudomonadati</taxon>
        <taxon>Pseudomonadota</taxon>
        <taxon>Alphaproteobacteria</taxon>
        <taxon>Hyphomicrobiales</taxon>
        <taxon>Methylobacteriaceae</taxon>
        <taxon>Methylobacterium</taxon>
    </lineage>
</organism>
<keyword id="KW-0963">Cytoplasm</keyword>
<keyword id="KW-0328">Glycosyltransferase</keyword>
<keyword id="KW-0660">Purine salvage</keyword>
<keyword id="KW-0808">Transferase</keyword>
<sequence length="181" mass="19580">MEARRHVALKESVRSIPDYPKPGIIFRDITTLLSDPRAFRRAVDALVHPYAGGQIHQVAGIEARGFILGGAIAHQLSCGFVPIRKKGKLPHKTVSMAYALEYGTDEIEIHVDAVRPGDKVLLVDDLIATGGTAIAAVNLLQKIGAEIVAACFVIDLPEIGGAQRLRDLGVEVRTLMQFEGH</sequence>
<proteinExistence type="inferred from homology"/>